<sequence length="828" mass="91049">MKQRSICPGRLSTAIAVALCCFPPFSSGQESPGTIYQFNDGFIVGSREKVDPSRFSTSAISEGVYSLDVYTNGEWKGRYDLKITAGKDGKMGVCYTKAMLMQYGISPEKLNPQLSEKEGFCGRLQEWRHEDNVKDTLIQSSLRLDIAVPQIYEDQRLKNFVSPQFWDKGVAALNLGWMANAWNSHISSANGSDNSSAYLGVNAGLSWDGWLLKHIGNLNWQQQQGKAHWNSNQTYLQRPIPQINSIVSGGQIFTNGEFFDTIGLRGVNLATDDNMFPDGMRSYAPEIRDVAQSNALATVRQGSNIIYQTTVPPGPFTLQDVYPSGYGSDLEVSVKEGDGSVEVFSVPYASVAQLLRPGMTRYALSAGKVDDSSLRNKPMLYQGTWQHGLNNLFTGYTGVTGFDDYQAFLLGTGMNTGIGALSFDVTHTRLKSDTLDEHGQSYRATFNRMFTETQTSIVLAAYRYSTKGYYNLNDALYAVDQEKNYNSNYTVWRQKNGMTFTVNQNLPDGWGGFYLCGRVADYWNRSGTEKQYQFSYNNMYGRLSWSVDAQRVYTPDSSGHRRDDRVSLNFSYPLWFGENRTANLTSNTAFNNSRFASSQIGVNGSLDSENNLNYGVSTTTATGRQHDVALNGSYRTPWTTLNGSYSQGEGYRQSGVGASGTLIAHQHGVVFSPETGPTMALIEAKDAAGVMLPGSPGTRIDSNGYAILPYLRPYRINSVEIDPKGSNDDVAFGSTVAQVVPWEGSVVKVSFDTTLQNNITLRARQANGLPLPFAATIFGPSGKEIGVVGQGSMMFISDASAPKATVKWSGGQCSVELSQEKTKETLCR</sequence>
<protein>
    <recommendedName>
        <fullName>Outer membrane usher protein MrkC</fullName>
    </recommendedName>
</protein>
<dbReference type="EMBL" id="M55912">
    <property type="protein sequence ID" value="AAA25095.1"/>
    <property type="molecule type" value="Genomic_DNA"/>
</dbReference>
<dbReference type="PIR" id="D39142">
    <property type="entry name" value="D39142"/>
</dbReference>
<dbReference type="SMR" id="P21647"/>
<dbReference type="TCDB" id="1.B.11.3.2">
    <property type="family name" value="the outer membrane fimbrial usher porin (fup) family"/>
</dbReference>
<dbReference type="GO" id="GO:0009279">
    <property type="term" value="C:cell outer membrane"/>
    <property type="evidence" value="ECO:0007669"/>
    <property type="project" value="UniProtKB-SubCell"/>
</dbReference>
<dbReference type="GO" id="GO:0015473">
    <property type="term" value="F:fimbrial usher porin activity"/>
    <property type="evidence" value="ECO:0007669"/>
    <property type="project" value="InterPro"/>
</dbReference>
<dbReference type="GO" id="GO:0009297">
    <property type="term" value="P:pilus assembly"/>
    <property type="evidence" value="ECO:0007669"/>
    <property type="project" value="InterPro"/>
</dbReference>
<dbReference type="Gene3D" id="2.60.40.2070">
    <property type="match status" value="1"/>
</dbReference>
<dbReference type="Gene3D" id="2.60.40.3110">
    <property type="match status" value="1"/>
</dbReference>
<dbReference type="Gene3D" id="3.10.20.410">
    <property type="match status" value="1"/>
</dbReference>
<dbReference type="Gene3D" id="2.60.40.2610">
    <property type="entry name" value="Outer membrane usher protein FimD, plug domain"/>
    <property type="match status" value="1"/>
</dbReference>
<dbReference type="InterPro" id="IPR000015">
    <property type="entry name" value="Fimb_usher"/>
</dbReference>
<dbReference type="InterPro" id="IPR018030">
    <property type="entry name" value="Fimbrial_membr_usher_CS"/>
</dbReference>
<dbReference type="InterPro" id="IPR042186">
    <property type="entry name" value="FimD_plug_dom"/>
</dbReference>
<dbReference type="InterPro" id="IPR025949">
    <property type="entry name" value="PapC-like_C"/>
</dbReference>
<dbReference type="InterPro" id="IPR043142">
    <property type="entry name" value="PapC-like_C_sf"/>
</dbReference>
<dbReference type="InterPro" id="IPR025885">
    <property type="entry name" value="PapC_N"/>
</dbReference>
<dbReference type="InterPro" id="IPR037224">
    <property type="entry name" value="PapC_N_sf"/>
</dbReference>
<dbReference type="PANTHER" id="PTHR30451">
    <property type="entry name" value="OUTER MEMBRANE USHER PROTEIN"/>
    <property type="match status" value="1"/>
</dbReference>
<dbReference type="PANTHER" id="PTHR30451:SF3">
    <property type="entry name" value="OUTER MEMBRANE USHER PROTEIN HTRE-RELATED"/>
    <property type="match status" value="1"/>
</dbReference>
<dbReference type="Pfam" id="PF13953">
    <property type="entry name" value="PapC_C"/>
    <property type="match status" value="1"/>
</dbReference>
<dbReference type="Pfam" id="PF13954">
    <property type="entry name" value="PapC_N"/>
    <property type="match status" value="1"/>
</dbReference>
<dbReference type="Pfam" id="PF00577">
    <property type="entry name" value="Usher"/>
    <property type="match status" value="1"/>
</dbReference>
<dbReference type="SUPFAM" id="SSF141729">
    <property type="entry name" value="FimD N-terminal domain-like"/>
    <property type="match status" value="1"/>
</dbReference>
<dbReference type="PROSITE" id="PS01151">
    <property type="entry name" value="FIMBRIAL_USHER"/>
    <property type="match status" value="1"/>
</dbReference>
<gene>
    <name type="primary">mrkC</name>
</gene>
<evidence type="ECO:0000250" key="1"/>
<evidence type="ECO:0000255" key="2"/>
<evidence type="ECO:0000305" key="3"/>
<keyword id="KW-0998">Cell outer membrane</keyword>
<keyword id="KW-1015">Disulfide bond</keyword>
<keyword id="KW-1029">Fimbrium biogenesis</keyword>
<keyword id="KW-0472">Membrane</keyword>
<keyword id="KW-0732">Signal</keyword>
<keyword id="KW-0812">Transmembrane</keyword>
<keyword id="KW-1134">Transmembrane beta strand</keyword>
<keyword id="KW-0813">Transport</keyword>
<comment type="function">
    <text>Involved in the export and assembly of the type 3 fimbrial subunit (MrkA).</text>
</comment>
<comment type="subcellular location">
    <subcellularLocation>
        <location evidence="1">Cell outer membrane</location>
        <topology evidence="1">Multi-pass membrane protein</topology>
    </subcellularLocation>
</comment>
<comment type="similarity">
    <text evidence="3">Belongs to the fimbrial export usher family.</text>
</comment>
<proteinExistence type="inferred from homology"/>
<feature type="signal peptide" evidence="2">
    <location>
        <begin position="1"/>
        <end position="18"/>
    </location>
</feature>
<feature type="chain" id="PRO_0000009321" description="Outer membrane usher protein MrkC">
    <location>
        <begin position="19"/>
        <end position="828"/>
    </location>
</feature>
<feature type="disulfide bond" evidence="2">
    <location>
        <begin position="813"/>
        <end position="827"/>
    </location>
</feature>
<organism>
    <name type="scientific">Klebsiella pneumoniae</name>
    <dbReference type="NCBI Taxonomy" id="573"/>
    <lineage>
        <taxon>Bacteria</taxon>
        <taxon>Pseudomonadati</taxon>
        <taxon>Pseudomonadota</taxon>
        <taxon>Gammaproteobacteria</taxon>
        <taxon>Enterobacterales</taxon>
        <taxon>Enterobacteriaceae</taxon>
        <taxon>Klebsiella/Raoultella group</taxon>
        <taxon>Klebsiella</taxon>
        <taxon>Klebsiella pneumoniae complex</taxon>
    </lineage>
</organism>
<name>MRKC_KLEPN</name>
<accession>P21647</accession>
<reference key="1">
    <citation type="journal article" date="1991" name="J. Bacteriol.">
        <title>Nucleotide sequence and functions of mrk determinants necessary for expression of type 3 fimbriae in Klebsiella pneumoniae.</title>
        <authorList>
            <person name="Allen B.L."/>
            <person name="Gerlach G.-F."/>
            <person name="Clegg S."/>
        </authorList>
    </citation>
    <scope>NUCLEOTIDE SEQUENCE [GENOMIC DNA]</scope>
    <source>
        <strain>IA565</strain>
    </source>
</reference>